<name>Y1176_SACI7</name>
<comment type="similarity">
    <text evidence="1">Belongs to the UPF0200 family.</text>
</comment>
<protein>
    <recommendedName>
        <fullName evidence="1">UPF0200 protein YG5714_1176</fullName>
    </recommendedName>
</protein>
<evidence type="ECO:0000255" key="1">
    <source>
        <dbReference type="HAMAP-Rule" id="MF_01111"/>
    </source>
</evidence>
<keyword id="KW-0067">ATP-binding</keyword>
<keyword id="KW-0547">Nucleotide-binding</keyword>
<dbReference type="EMBL" id="CP001403">
    <property type="protein sequence ID" value="ACP45443.1"/>
    <property type="molecule type" value="Genomic_DNA"/>
</dbReference>
<dbReference type="RefSeq" id="WP_012716099.1">
    <property type="nucleotide sequence ID" value="NC_012622.1"/>
</dbReference>
<dbReference type="SMR" id="C3NDQ4"/>
<dbReference type="GeneID" id="7806874"/>
<dbReference type="KEGG" id="siy:YG5714_1176"/>
<dbReference type="HOGENOM" id="CLU_096329_1_0_2"/>
<dbReference type="Proteomes" id="UP000002308">
    <property type="component" value="Chromosome"/>
</dbReference>
<dbReference type="GO" id="GO:0005524">
    <property type="term" value="F:ATP binding"/>
    <property type="evidence" value="ECO:0007669"/>
    <property type="project" value="UniProtKB-UniRule"/>
</dbReference>
<dbReference type="CDD" id="cd02022">
    <property type="entry name" value="DPCK"/>
    <property type="match status" value="1"/>
</dbReference>
<dbReference type="Gene3D" id="3.40.50.300">
    <property type="entry name" value="P-loop containing nucleotide triphosphate hydrolases"/>
    <property type="match status" value="1"/>
</dbReference>
<dbReference type="HAMAP" id="MF_01111">
    <property type="entry name" value="UPF0200"/>
    <property type="match status" value="1"/>
</dbReference>
<dbReference type="InterPro" id="IPR022970">
    <property type="entry name" value="NTP_hydrolase-rel"/>
</dbReference>
<dbReference type="InterPro" id="IPR027417">
    <property type="entry name" value="P-loop_NTPase"/>
</dbReference>
<dbReference type="PANTHER" id="PTHR41930:SF1">
    <property type="entry name" value="DEPHOSPHO-COA KINASE"/>
    <property type="match status" value="1"/>
</dbReference>
<dbReference type="PANTHER" id="PTHR41930">
    <property type="entry name" value="UPF0200 PROTEIN MJ1399"/>
    <property type="match status" value="1"/>
</dbReference>
<dbReference type="Pfam" id="PF13238">
    <property type="entry name" value="AAA_18"/>
    <property type="match status" value="1"/>
</dbReference>
<dbReference type="SUPFAM" id="SSF52540">
    <property type="entry name" value="P-loop containing nucleoside triphosphate hydrolases"/>
    <property type="match status" value="1"/>
</dbReference>
<sequence length="188" mass="21499">MSYLVVTIKVILITGMPGSGKSEFAKLLKERGAKVIVMSEVVRKRYSIEAKPGERLMDFAKRLREIYGDGVVARLCVEELGTSNHDLVVFDGVRSLAEVEEFKRLLGDSVYIVAVHSPPKIRYKRMIERLRSDDSKEISELIRRDREELKLGIGEVIAMADYIITNDSNYEEFKRRCEEVTDRVLKNG</sequence>
<gene>
    <name type="ordered locus">YG5714_1176</name>
</gene>
<accession>C3NDQ4</accession>
<reference key="1">
    <citation type="journal article" date="2009" name="Proc. Natl. Acad. Sci. U.S.A.">
        <title>Biogeography of the Sulfolobus islandicus pan-genome.</title>
        <authorList>
            <person name="Reno M.L."/>
            <person name="Held N.L."/>
            <person name="Fields C.J."/>
            <person name="Burke P.V."/>
            <person name="Whitaker R.J."/>
        </authorList>
    </citation>
    <scope>NUCLEOTIDE SEQUENCE [LARGE SCALE GENOMIC DNA]</scope>
    <source>
        <strain>Y.G.57.14 / Yellowstone #1</strain>
    </source>
</reference>
<feature type="chain" id="PRO_1000213580" description="UPF0200 protein YG5714_1176">
    <location>
        <begin position="1"/>
        <end position="188"/>
    </location>
</feature>
<feature type="binding site" evidence="1">
    <location>
        <begin position="15"/>
        <end position="22"/>
    </location>
    <ligand>
        <name>ATP</name>
        <dbReference type="ChEBI" id="CHEBI:30616"/>
    </ligand>
</feature>
<organism>
    <name type="scientific">Saccharolobus islandicus (strain Y.G.57.14 / Yellowstone #1)</name>
    <name type="common">Sulfolobus islandicus</name>
    <dbReference type="NCBI Taxonomy" id="439386"/>
    <lineage>
        <taxon>Archaea</taxon>
        <taxon>Thermoproteota</taxon>
        <taxon>Thermoprotei</taxon>
        <taxon>Sulfolobales</taxon>
        <taxon>Sulfolobaceae</taxon>
        <taxon>Saccharolobus</taxon>
    </lineage>
</organism>
<proteinExistence type="inferred from homology"/>